<evidence type="ECO:0000255" key="1">
    <source>
        <dbReference type="PROSITE-ProRule" id="PRU01001"/>
    </source>
</evidence>
<evidence type="ECO:0000255" key="2">
    <source>
        <dbReference type="PROSITE-ProRule" id="PRU01002"/>
    </source>
</evidence>
<evidence type="ECO:0000256" key="3">
    <source>
        <dbReference type="SAM" id="MobiDB-lite"/>
    </source>
</evidence>
<evidence type="ECO:0000269" key="4">
    <source>
    </source>
</evidence>
<evidence type="ECO:0000269" key="5">
    <source>
    </source>
</evidence>
<evidence type="ECO:0000269" key="6">
    <source>
    </source>
</evidence>
<evidence type="ECO:0000269" key="7">
    <source>
    </source>
</evidence>
<evidence type="ECO:0000269" key="8">
    <source>
    </source>
</evidence>
<evidence type="ECO:0000269" key="9">
    <source>
    </source>
</evidence>
<evidence type="ECO:0000303" key="10">
    <source>
    </source>
</evidence>
<evidence type="ECO:0000303" key="11">
    <source>
    </source>
</evidence>
<evidence type="ECO:0000303" key="12">
    <source>
    </source>
</evidence>
<evidence type="ECO:0000303" key="13">
    <source>
    </source>
</evidence>
<evidence type="ECO:0000303" key="14">
    <source>
    </source>
</evidence>
<evidence type="ECO:0000305" key="15"/>
<evidence type="ECO:0000305" key="16">
    <source>
    </source>
</evidence>
<evidence type="ECO:0000305" key="17">
    <source>
    </source>
</evidence>
<evidence type="ECO:0000305" key="18">
    <source>
    </source>
</evidence>
<evidence type="ECO:0000305" key="19">
    <source>
    </source>
</evidence>
<evidence type="ECO:0000312" key="20">
    <source>
        <dbReference type="EMBL" id="BAD07524.1"/>
    </source>
</evidence>
<evidence type="ECO:0000312" key="21">
    <source>
        <dbReference type="EMBL" id="BAF09757.1"/>
    </source>
</evidence>
<evidence type="ECO:0000312" key="22">
    <source>
        <dbReference type="EMBL" id="EEE57634.1"/>
    </source>
</evidence>
<sequence length="394" mass="41836">MAMPYASLSPAVADHRSSPAAATASLLPFCRSTPLSAGGGGVAMGEDAPMTARWPPAAAARLPPFTAAQYEELEQQALIYKYLVAGVPVPPDLVLPIRRGLDSLAARFYNHPALGYGPYFGKKLDPEPGRCRRTDGKKWRCSKEAAPDSKYCERHMHRGRNRSRKPVETQLVAQSQPPSSVVGSAAAPLAAASNGSSFQNHSLYPAIAGSNGGGGGRNMPSSFGSALGSQLHMDNAAPYAAVGGGTGKDLRYTAYGTRSLADEQSQLITEAINTSIENPWRLLPSQNSPFPLSSYSQLGALSDLGQNTPSSLSKVQRQPLSFFGNDYAAVDSVKQENQTLRPFFDEWPKGRDSWSDLADENANLSSFSGTQLSISIPMASSDFSAASSRSTNGD</sequence>
<accession>Q6ZIK5</accession>
<accession>A0A0P0VNR1</accession>
<accession>B9F1Z2</accession>
<accession>Q70LH5</accession>
<gene>
    <name evidence="10" type="primary">GRF4</name>
    <name evidence="14" type="synonym">GL2</name>
    <name evidence="13" type="synonym">GLW2</name>
    <name evidence="11" type="synonym">GS2</name>
    <name evidence="12" type="synonym">PT2</name>
    <name evidence="21" type="ordered locus">Os02g0701300</name>
    <name evidence="15" type="ordered locus">LOC_Os02g47280</name>
    <name evidence="20" type="ORF">OJ1111_E07.19</name>
    <name evidence="22" type="ORF">OsJ_08054</name>
</gene>
<reference key="1">
    <citation type="journal article" date="2005" name="Nature">
        <title>The map-based sequence of the rice genome.</title>
        <authorList>
            <consortium name="International rice genome sequencing project (IRGSP)"/>
        </authorList>
    </citation>
    <scope>NUCLEOTIDE SEQUENCE [LARGE SCALE GENOMIC DNA]</scope>
    <source>
        <strain>cv. Nipponbare</strain>
    </source>
</reference>
<reference key="2">
    <citation type="journal article" date="2008" name="Nucleic Acids Res.">
        <title>The rice annotation project database (RAP-DB): 2008 update.</title>
        <authorList>
            <consortium name="The rice annotation project (RAP)"/>
        </authorList>
    </citation>
    <scope>GENOME REANNOTATION</scope>
    <source>
        <strain>cv. Nipponbare</strain>
    </source>
</reference>
<reference key="3">
    <citation type="journal article" date="2013" name="Rice">
        <title>Improvement of the Oryza sativa Nipponbare reference genome using next generation sequence and optical map data.</title>
        <authorList>
            <person name="Kawahara Y."/>
            <person name="de la Bastide M."/>
            <person name="Hamilton J.P."/>
            <person name="Kanamori H."/>
            <person name="McCombie W.R."/>
            <person name="Ouyang S."/>
            <person name="Schwartz D.C."/>
            <person name="Tanaka T."/>
            <person name="Wu J."/>
            <person name="Zhou S."/>
            <person name="Childs K.L."/>
            <person name="Davidson R.M."/>
            <person name="Lin H."/>
            <person name="Quesada-Ocampo L."/>
            <person name="Vaillancourt B."/>
            <person name="Sakai H."/>
            <person name="Lee S.S."/>
            <person name="Kim J."/>
            <person name="Numa H."/>
            <person name="Itoh T."/>
            <person name="Buell C.R."/>
            <person name="Matsumoto T."/>
        </authorList>
    </citation>
    <scope>GENOME REANNOTATION</scope>
    <source>
        <strain>cv. Nipponbare</strain>
    </source>
</reference>
<reference key="4">
    <citation type="journal article" date="2005" name="PLoS Biol.">
        <title>The genomes of Oryza sativa: a history of duplications.</title>
        <authorList>
            <person name="Yu J."/>
            <person name="Wang J."/>
            <person name="Lin W."/>
            <person name="Li S."/>
            <person name="Li H."/>
            <person name="Zhou J."/>
            <person name="Ni P."/>
            <person name="Dong W."/>
            <person name="Hu S."/>
            <person name="Zeng C."/>
            <person name="Zhang J."/>
            <person name="Zhang Y."/>
            <person name="Li R."/>
            <person name="Xu Z."/>
            <person name="Li S."/>
            <person name="Li X."/>
            <person name="Zheng H."/>
            <person name="Cong L."/>
            <person name="Lin L."/>
            <person name="Yin J."/>
            <person name="Geng J."/>
            <person name="Li G."/>
            <person name="Shi J."/>
            <person name="Liu J."/>
            <person name="Lv H."/>
            <person name="Li J."/>
            <person name="Wang J."/>
            <person name="Deng Y."/>
            <person name="Ran L."/>
            <person name="Shi X."/>
            <person name="Wang X."/>
            <person name="Wu Q."/>
            <person name="Li C."/>
            <person name="Ren X."/>
            <person name="Wang J."/>
            <person name="Wang X."/>
            <person name="Li D."/>
            <person name="Liu D."/>
            <person name="Zhang X."/>
            <person name="Ji Z."/>
            <person name="Zhao W."/>
            <person name="Sun Y."/>
            <person name="Zhang Z."/>
            <person name="Bao J."/>
            <person name="Han Y."/>
            <person name="Dong L."/>
            <person name="Ji J."/>
            <person name="Chen P."/>
            <person name="Wu S."/>
            <person name="Liu J."/>
            <person name="Xiao Y."/>
            <person name="Bu D."/>
            <person name="Tan J."/>
            <person name="Yang L."/>
            <person name="Ye C."/>
            <person name="Zhang J."/>
            <person name="Xu J."/>
            <person name="Zhou Y."/>
            <person name="Yu Y."/>
            <person name="Zhang B."/>
            <person name="Zhuang S."/>
            <person name="Wei H."/>
            <person name="Liu B."/>
            <person name="Lei M."/>
            <person name="Yu H."/>
            <person name="Li Y."/>
            <person name="Xu H."/>
            <person name="Wei S."/>
            <person name="He X."/>
            <person name="Fang L."/>
            <person name="Zhang Z."/>
            <person name="Zhang Y."/>
            <person name="Huang X."/>
            <person name="Su Z."/>
            <person name="Tong W."/>
            <person name="Li J."/>
            <person name="Tong Z."/>
            <person name="Li S."/>
            <person name="Ye J."/>
            <person name="Wang L."/>
            <person name="Fang L."/>
            <person name="Lei T."/>
            <person name="Chen C.-S."/>
            <person name="Chen H.-C."/>
            <person name="Xu Z."/>
            <person name="Li H."/>
            <person name="Huang H."/>
            <person name="Zhang F."/>
            <person name="Xu H."/>
            <person name="Li N."/>
            <person name="Zhao C."/>
            <person name="Li S."/>
            <person name="Dong L."/>
            <person name="Huang Y."/>
            <person name="Li L."/>
            <person name="Xi Y."/>
            <person name="Qi Q."/>
            <person name="Li W."/>
            <person name="Zhang B."/>
            <person name="Hu W."/>
            <person name="Zhang Y."/>
            <person name="Tian X."/>
            <person name="Jiao Y."/>
            <person name="Liang X."/>
            <person name="Jin J."/>
            <person name="Gao L."/>
            <person name="Zheng W."/>
            <person name="Hao B."/>
            <person name="Liu S.-M."/>
            <person name="Wang W."/>
            <person name="Yuan L."/>
            <person name="Cao M."/>
            <person name="McDermott J."/>
            <person name="Samudrala R."/>
            <person name="Wang J."/>
            <person name="Wong G.K.-S."/>
            <person name="Yang H."/>
        </authorList>
    </citation>
    <scope>NUCLEOTIDE SEQUENCE [LARGE SCALE GENOMIC DNA]</scope>
    <source>
        <strain>cv. Nipponbare</strain>
    </source>
</reference>
<reference key="5">
    <citation type="journal article" date="2003" name="Science">
        <title>Collection, mapping, and annotation of over 28,000 cDNA clones from japonica rice.</title>
        <authorList>
            <consortium name="The rice full-length cDNA consortium"/>
        </authorList>
    </citation>
    <scope>NUCLEOTIDE SEQUENCE [LARGE SCALE MRNA]</scope>
    <source>
        <strain>cv. Nipponbare</strain>
    </source>
</reference>
<reference key="6">
    <citation type="journal article" date="2004" name="Plant J.">
        <title>Development of an efficient method for the isolation of factors involved in gene transcription during rice embryo development.</title>
        <authorList>
            <person name="Ye R."/>
            <person name="Yao Q.-H."/>
            <person name="Xu Z.-H."/>
            <person name="Xue H.-W."/>
        </authorList>
    </citation>
    <scope>NUCLEOTIDE SEQUENCE [MRNA] OF 168-392</scope>
    <source>
        <strain>cv. Nipponbare</strain>
        <tissue>Embryo</tissue>
    </source>
</reference>
<reference key="7">
    <citation type="journal article" date="2004" name="Plant Cell Physiol.">
        <title>Whole genome analysis of the OsGRF gene family encoding plant-specific putative transcription activators in rice (Oryza sativa L.).</title>
        <authorList>
            <person name="Choi D."/>
            <person name="Kim J.H."/>
            <person name="Kende H."/>
        </authorList>
    </citation>
    <scope>IDENTIFICATION</scope>
    <scope>GENE FAMILY</scope>
    <source>
        <strain>cv. Nipponbare</strain>
    </source>
</reference>
<reference key="8">
    <citation type="journal article" date="2014" name="Plant Physiol.">
        <title>Interaction between the GROWTH-REGULATING FACTOR and KNOTTED1-LIKE HOMEOBOX families of transcription factors.</title>
        <authorList>
            <person name="Kuijt S.J."/>
            <person name="Greco R."/>
            <person name="Agalou A."/>
            <person name="Shao J."/>
            <person name="'t Hoen C.C."/>
            <person name="Overnaes E."/>
            <person name="Osnato M."/>
            <person name="Curiale S."/>
            <person name="Meynard D."/>
            <person name="van Gulik R."/>
            <person name="de Faria Maraschin S."/>
            <person name="Atallah M."/>
            <person name="de Kam R.J."/>
            <person name="Lamers G.E."/>
            <person name="Guiderdoni E."/>
            <person name="Rossini L."/>
            <person name="Meijer A.H."/>
            <person name="Ouwerkerk P.B."/>
        </authorList>
    </citation>
    <scope>FUNCTION</scope>
</reference>
<reference key="9">
    <citation type="journal article" date="2015" name="Mol. Plant">
        <title>A rare allele of GS2 enhances grain size and grain yield in rice.</title>
        <authorList>
            <person name="Hu J."/>
            <person name="Wang Y."/>
            <person name="Fang Y."/>
            <person name="Zeng L."/>
            <person name="Xu J."/>
            <person name="Yu H."/>
            <person name="Shi Z."/>
            <person name="Pan J."/>
            <person name="Zhang D."/>
            <person name="Kang S."/>
            <person name="Zhu L."/>
            <person name="Dong G."/>
            <person name="Guo L."/>
            <person name="Zeng D."/>
            <person name="Zhang G."/>
            <person name="Xie L."/>
            <person name="Xiong G."/>
            <person name="Li J."/>
            <person name="Qian Q."/>
        </authorList>
    </citation>
    <scope>FUNCTION</scope>
    <scope>SUBCELLULAR LOCATION</scope>
    <scope>TISSUE SPECIFICITY</scope>
    <scope>INDUCTION</scope>
    <scope>DOMAIN</scope>
    <scope>POLYMORPHISM</scope>
    <scope>VARIANT LYS-163</scope>
</reference>
<reference key="10">
    <citation type="journal article" date="2015" name="Nat. Plants">
        <title>Control of grain size and rice yield by GL2-mediated brassinosteroid responses.</title>
        <authorList>
            <person name="Che R."/>
            <person name="Tong H."/>
            <person name="Shi B."/>
            <person name="Liu Y."/>
            <person name="Fang S."/>
            <person name="Liu D."/>
            <person name="Xiao Y."/>
            <person name="Hu B."/>
            <person name="Liu L."/>
            <person name="Wang H."/>
            <person name="Zhao M."/>
            <person name="Chu C."/>
        </authorList>
    </citation>
    <scope>FUNCTION</scope>
    <scope>ACTIVITY REGULATION</scope>
    <scope>INTERACTION WITH GIF1 AND GSK2</scope>
    <scope>SUBCELLULAR LOCATION</scope>
    <scope>TISSUE SPECIFICITY</scope>
    <scope>INDUCTION</scope>
    <scope>DOMAIN</scope>
    <scope>POLYMORPHISM</scope>
    <scope>VARIANT LYS-163</scope>
</reference>
<reference key="11">
    <citation type="journal article" date="2015" name="Nat. Plants">
        <title>Regulation of OsGRF4 by OsmiR396 controls grain size and yield in rice.</title>
        <authorList>
            <person name="Duan P."/>
            <person name="Ni S."/>
            <person name="Wang J."/>
            <person name="Zhang B."/>
            <person name="Xu R."/>
            <person name="Wang Y."/>
            <person name="Chen H."/>
            <person name="Zhu X."/>
            <person name="Li Y."/>
        </authorList>
    </citation>
    <scope>FUNCTION</scope>
    <scope>INTERACTION WITH GIF1</scope>
    <scope>SUBCELLULAR LOCATION</scope>
    <scope>TISSUE SPECIFICITY</scope>
    <scope>INDUCTION</scope>
    <scope>POLYMORPHISM</scope>
    <scope>VARIANT LYS-163</scope>
</reference>
<reference key="12">
    <citation type="journal article" date="2016" name="J. Integr. Plant Biol.">
        <title>OsGRF4 controls grain shape, panicle length and seed shattering in rice.</title>
        <authorList>
            <person name="Sun P."/>
            <person name="Zhang W."/>
            <person name="Wang Y."/>
            <person name="He Q."/>
            <person name="Shu F."/>
            <person name="Liu H."/>
            <person name="Wang J."/>
            <person name="Wang J."/>
            <person name="Yuan L."/>
            <person name="Deng H."/>
        </authorList>
    </citation>
    <scope>FUNCTION</scope>
    <scope>SUBCELLULAR LOCATION</scope>
    <scope>INDUCTION</scope>
    <scope>POLYMORPHISM</scope>
    <scope>VARIANT LYS-163</scope>
</reference>
<reference key="13">
    <citation type="journal article" date="2016" name="Plant Biotechnol. J.">
        <title>The OsmiR396c-OsGRF4-OsGIF1 regulatory module determines grain size and yield in rice.</title>
        <authorList>
            <person name="Li S."/>
            <person name="Gao F."/>
            <person name="Xie K."/>
            <person name="Zeng X."/>
            <person name="Cao Y."/>
            <person name="Zeng J."/>
            <person name="He Z."/>
            <person name="Ren Y."/>
            <person name="Li W."/>
            <person name="Deng Q."/>
            <person name="Wang S."/>
            <person name="Zheng A."/>
            <person name="Zhu J."/>
            <person name="Liu H."/>
            <person name="Wang L."/>
            <person name="Li P."/>
        </authorList>
    </citation>
    <scope>FUNCTION</scope>
    <scope>INTERACTION WITH GIF1</scope>
    <scope>SUBCELLULAR LOCATION</scope>
    <scope>TISSUE SPECIFICITY</scope>
    <scope>INDUCTION</scope>
    <scope>DOMAIN</scope>
    <scope>POLYMORPHISM</scope>
    <scope>VARIANT LYS-163</scope>
</reference>
<organism>
    <name type="scientific">Oryza sativa subsp. japonica</name>
    <name type="common">Rice</name>
    <dbReference type="NCBI Taxonomy" id="39947"/>
    <lineage>
        <taxon>Eukaryota</taxon>
        <taxon>Viridiplantae</taxon>
        <taxon>Streptophyta</taxon>
        <taxon>Embryophyta</taxon>
        <taxon>Tracheophyta</taxon>
        <taxon>Spermatophyta</taxon>
        <taxon>Magnoliopsida</taxon>
        <taxon>Liliopsida</taxon>
        <taxon>Poales</taxon>
        <taxon>Poaceae</taxon>
        <taxon>BOP clade</taxon>
        <taxon>Oryzoideae</taxon>
        <taxon>Oryzeae</taxon>
        <taxon>Oryzinae</taxon>
        <taxon>Oryza</taxon>
        <taxon>Oryza sativa</taxon>
    </lineage>
</organism>
<proteinExistence type="evidence at protein level"/>
<name>GRF4_ORYSJ</name>
<dbReference type="EMBL" id="AP003994">
    <property type="protein sequence ID" value="BAD07524.1"/>
    <property type="molecule type" value="Genomic_DNA"/>
</dbReference>
<dbReference type="EMBL" id="AP008208">
    <property type="protein sequence ID" value="BAF09757.1"/>
    <property type="molecule type" value="Genomic_DNA"/>
</dbReference>
<dbReference type="EMBL" id="AP014958">
    <property type="protein sequence ID" value="BAS80470.1"/>
    <property type="status" value="ALT_SEQ"/>
    <property type="molecule type" value="Genomic_DNA"/>
</dbReference>
<dbReference type="EMBL" id="CM000139">
    <property type="protein sequence ID" value="EEE57634.1"/>
    <property type="status" value="ALT_SEQ"/>
    <property type="molecule type" value="Genomic_DNA"/>
</dbReference>
<dbReference type="EMBL" id="AK063983">
    <property type="protein sequence ID" value="BAG88946.1"/>
    <property type="molecule type" value="mRNA"/>
</dbReference>
<dbReference type="EMBL" id="AJ566408">
    <property type="protein sequence ID" value="CAD97478.1"/>
    <property type="molecule type" value="mRNA"/>
</dbReference>
<dbReference type="EMBL" id="BK004859">
    <property type="protein sequence ID" value="DAA05208.1"/>
    <property type="molecule type" value="Genomic_DNA"/>
</dbReference>
<dbReference type="RefSeq" id="XP_015624297.1">
    <property type="nucleotide sequence ID" value="XM_015768811.1"/>
</dbReference>
<dbReference type="FunCoup" id="Q6ZIK5">
    <property type="interactions" value="383"/>
</dbReference>
<dbReference type="STRING" id="39947.Q6ZIK5"/>
<dbReference type="PaxDb" id="39947-Q6ZIK5"/>
<dbReference type="EnsemblPlants" id="Os02t0701300-01">
    <property type="protein sequence ID" value="Os02t0701300-01"/>
    <property type="gene ID" value="Os02g0701300"/>
</dbReference>
<dbReference type="Gramene" id="Os02t0701300-01">
    <property type="protein sequence ID" value="Os02t0701300-01"/>
    <property type="gene ID" value="Os02g0701300"/>
</dbReference>
<dbReference type="KEGG" id="dosa:Os02g0701300"/>
<dbReference type="InParanoid" id="Q6ZIK5"/>
<dbReference type="OrthoDB" id="1927209at2759"/>
<dbReference type="PlantReactome" id="R-OSA-9035605">
    <property type="pathway name" value="Regulation of seed size"/>
</dbReference>
<dbReference type="Proteomes" id="UP000000763">
    <property type="component" value="Chromosome 2"/>
</dbReference>
<dbReference type="Proteomes" id="UP000007752">
    <property type="component" value="Chromosome 2"/>
</dbReference>
<dbReference type="Proteomes" id="UP000059680">
    <property type="component" value="Chromosome 2"/>
</dbReference>
<dbReference type="ExpressionAtlas" id="Q6ZIK5">
    <property type="expression patterns" value="baseline and differential"/>
</dbReference>
<dbReference type="GO" id="GO:0005634">
    <property type="term" value="C:nucleus"/>
    <property type="evidence" value="ECO:0000314"/>
    <property type="project" value="UniProtKB"/>
</dbReference>
<dbReference type="GO" id="GO:0005524">
    <property type="term" value="F:ATP binding"/>
    <property type="evidence" value="ECO:0007669"/>
    <property type="project" value="InterPro"/>
</dbReference>
<dbReference type="GO" id="GO:0008283">
    <property type="term" value="P:cell population proliferation"/>
    <property type="evidence" value="ECO:0000315"/>
    <property type="project" value="UniProtKB"/>
</dbReference>
<dbReference type="GO" id="GO:0006351">
    <property type="term" value="P:DNA-templated transcription"/>
    <property type="evidence" value="ECO:0007669"/>
    <property type="project" value="InterPro"/>
</dbReference>
<dbReference type="GO" id="GO:0048366">
    <property type="term" value="P:leaf development"/>
    <property type="evidence" value="ECO:0000315"/>
    <property type="project" value="UniProtKB"/>
</dbReference>
<dbReference type="GO" id="GO:0045893">
    <property type="term" value="P:positive regulation of DNA-templated transcription"/>
    <property type="evidence" value="ECO:0000314"/>
    <property type="project" value="UniProtKB"/>
</dbReference>
<dbReference type="GO" id="GO:0048316">
    <property type="term" value="P:seed development"/>
    <property type="evidence" value="ECO:0000315"/>
    <property type="project" value="UniProtKB"/>
</dbReference>
<dbReference type="InterPro" id="IPR014978">
    <property type="entry name" value="Gln-Leu-Gln_QLQ"/>
</dbReference>
<dbReference type="InterPro" id="IPR031137">
    <property type="entry name" value="GRF"/>
</dbReference>
<dbReference type="InterPro" id="IPR014977">
    <property type="entry name" value="WRC_dom"/>
</dbReference>
<dbReference type="PANTHER" id="PTHR31602:SF113">
    <property type="entry name" value="GROWTH-REGULATING FACTOR 4"/>
    <property type="match status" value="1"/>
</dbReference>
<dbReference type="PANTHER" id="PTHR31602">
    <property type="entry name" value="GROWTH-REGULATING FACTOR 5"/>
    <property type="match status" value="1"/>
</dbReference>
<dbReference type="Pfam" id="PF08880">
    <property type="entry name" value="QLQ"/>
    <property type="match status" value="1"/>
</dbReference>
<dbReference type="Pfam" id="PF08879">
    <property type="entry name" value="WRC"/>
    <property type="match status" value="1"/>
</dbReference>
<dbReference type="SMART" id="SM00951">
    <property type="entry name" value="QLQ"/>
    <property type="match status" value="1"/>
</dbReference>
<dbReference type="PROSITE" id="PS51666">
    <property type="entry name" value="QLQ"/>
    <property type="match status" value="1"/>
</dbReference>
<dbReference type="PROSITE" id="PS51667">
    <property type="entry name" value="WRC"/>
    <property type="match status" value="1"/>
</dbReference>
<comment type="function">
    <text evidence="4 5 6 7 8 9 16 17 18 19">Transcription activator that plays a role in the regulation of meristematic function in leaves, stems and inflorescences (PubMed:24532604). Transcription activator that plays a regulatory role in grain development (PubMed:26187814, PubMed:26936408, PubMed:27107174, PubMed:27250747, PubMed:27250749). Positively regulates grain size by promoting cell division and expansion, leading to increased grain length and width (PubMed:26187814, PubMed:26936408, PubMed:27107174, PubMed:27250747, PubMed:27250749). Positively regulates the expression of genes promoting cell proliferation (PubMed:26187814, PubMed:26936408). Activates the expression of expansin genes to promote cell expansion and grain size (PubMed:27250747). May promote grain size by activating brassinosteroid responses (PubMed:27250747). Component of a network formed by the microRNA396 (miRNA396), the GRFs and their interacting factors (GIFs) acting in the regulation of meristem function, at least partially through the control of cell proliferation (Probable). Component of the miRNA396c-GRF4-GIF1 regulatory module that plays an important role in grain size determination (Probable) (PubMed:27107174, PubMed:27250747, PubMed:27250749).</text>
</comment>
<comment type="activity regulation">
    <text evidence="8">Transactivation activity is repressed by GSK2.</text>
</comment>
<comment type="subunit">
    <text evidence="7 8 9">Interacts with GIF1 (PubMed:27107174, PubMed:27250747, PubMed:27250749). Interacts with GSK2 (PubMed:27250747).</text>
</comment>
<comment type="subcellular location">
    <subcellularLocation>
        <location evidence="2 5 6 7 8 9">Nucleus</location>
    </subcellularLocation>
</comment>
<comment type="tissue specificity">
    <text evidence="5 7 8 9">Expressed in stems (PubMed:27107174). Expressed in panicles (PubMed:26187814, PubMed:27107174, PubMed:27250747, PubMed:27250749).</text>
</comment>
<comment type="induction">
    <text evidence="5 6 7 8">The microRNA396c negatively regulates GRF4 at the transcriptional level.</text>
</comment>
<comment type="domain">
    <text evidence="5 7 8 15">The QLQ domain and WRC domain may be involved in protein-protein interaction and DNA-binding, respectively (Probable). The C-terminal region downstream of the QLQ and WRC domains is necessary for transactivation activity (PubMed:26187814, PubMed:27107174, PubMed:27250747).</text>
</comment>
<comment type="polymorphism">
    <text evidence="5 6 7 8 9">A two nucleotide mutation at the miRNA396c target site results in elevated transcript levels of GRF4, and the accumulation of GRF4 leads to enlarged cell size and increased cell number, which in turn results in enhanced grain weight and yield.</text>
</comment>
<comment type="miscellaneous">
    <text evidence="4 7">Plants over-expressing GRF4 exhibit increased grain length, width and weight (PubMed:27107174). Plants silencing GRF4 exhibit dwarfism, delayed growth and inflorescence formation (PubMed:24532604).</text>
</comment>
<comment type="similarity">
    <text evidence="15">Belongs to the GRF family.</text>
</comment>
<comment type="sequence caution" evidence="15">
    <conflict type="erroneous gene model prediction">
        <sequence resource="EMBL-CDS" id="BAS80470"/>
    </conflict>
</comment>
<comment type="sequence caution" evidence="15">
    <conflict type="erroneous gene model prediction">
        <sequence resource="EMBL-CDS" id="EEE57634"/>
    </conflict>
</comment>
<protein>
    <recommendedName>
        <fullName evidence="10">Growth-regulating factor 4</fullName>
        <shortName evidence="10">OsGRF4</shortName>
    </recommendedName>
    <alternativeName>
        <fullName evidence="13">Protein GRAIN LENGTH AND WIDTH 2</fullName>
    </alternativeName>
    <alternativeName>
        <fullName evidence="11">Protein GRAIN SIZE ON CHROMOSOME 2</fullName>
    </alternativeName>
    <alternativeName>
        <fullName evidence="12">Protein PANICLE TRAITS 2</fullName>
    </alternativeName>
    <alternativeName>
        <fullName evidence="15">Transcription activator GRF4</fullName>
    </alternativeName>
</protein>
<feature type="chain" id="PRO_0000419305" description="Growth-regulating factor 4">
    <location>
        <begin position="1"/>
        <end position="394"/>
    </location>
</feature>
<feature type="domain" description="QLQ" evidence="1">
    <location>
        <begin position="64"/>
        <end position="99"/>
    </location>
</feature>
<feature type="domain" description="WRC" evidence="2">
    <location>
        <begin position="125"/>
        <end position="169"/>
    </location>
</feature>
<feature type="region of interest" description="Disordered" evidence="3">
    <location>
        <begin position="156"/>
        <end position="180"/>
    </location>
</feature>
<feature type="short sequence motif" description="Bipartite nuclear localization signal" evidence="2">
    <location>
        <begin position="130"/>
        <end position="140"/>
    </location>
</feature>
<feature type="short sequence motif" description="Bipartite nuclear localization signal" evidence="2">
    <location>
        <begin position="158"/>
        <end position="165"/>
    </location>
</feature>
<feature type="compositionally biased region" description="Low complexity" evidence="3">
    <location>
        <begin position="170"/>
        <end position="180"/>
    </location>
</feature>
<feature type="sequence variant" description="Increased grain length, width and weight." evidence="5 6 7 8 9">
    <original>S</original>
    <variation>K</variation>
    <location>
        <position position="163"/>
    </location>
</feature>
<keyword id="KW-0010">Activator</keyword>
<keyword id="KW-0539">Nucleus</keyword>
<keyword id="KW-1185">Reference proteome</keyword>
<keyword id="KW-0804">Transcription</keyword>
<keyword id="KW-0805">Transcription regulation</keyword>